<accession>P35019</accession>
<sequence length="199" mass="22799">MSEISAQLVKELREITGAGMMDCKKALRESNGDKVMAIETLRKKGLASADRKANKVATEGVIVSYIHTGYKIGVLVEVNCETDFVARRNEFKDFAKDIAMQIAASPSVEYITFNDIPAEIIEKEKKIESMREDLKNKPEDIKQKIIEGRIRKNLELLVLYDQAYMRDQSINIETLVKLKISYFNENIKIRRFTKYILGN</sequence>
<geneLocation type="chloroplast"/>
<reference key="1">
    <citation type="journal article" date="1993" name="Plant Mol. Biol.">
        <title>Organization of plastid-encoded ATPase genes and flanking regions including homologues of infB and tsf in the thermophilic red alga Galdieria sulphuraria.</title>
        <authorList>
            <person name="Kostrzewa M."/>
            <person name="Zetsche K."/>
        </authorList>
    </citation>
    <scope>NUCLEOTIDE SEQUENCE [GENOMIC DNA]</scope>
    <source>
        <strain>14-1-1 / Isolate 107.79/Goettingen</strain>
    </source>
</reference>
<proteinExistence type="inferred from homology"/>
<dbReference type="EMBL" id="X67814">
    <property type="protein sequence ID" value="CAA48019.1"/>
    <property type="molecule type" value="Genomic_DNA"/>
</dbReference>
<dbReference type="SMR" id="P35019"/>
<dbReference type="GO" id="GO:0009507">
    <property type="term" value="C:chloroplast"/>
    <property type="evidence" value="ECO:0007669"/>
    <property type="project" value="UniProtKB-SubCell"/>
</dbReference>
<dbReference type="GO" id="GO:0005739">
    <property type="term" value="C:mitochondrion"/>
    <property type="evidence" value="ECO:0007669"/>
    <property type="project" value="UniProtKB-UniRule"/>
</dbReference>
<dbReference type="GO" id="GO:0003746">
    <property type="term" value="F:translation elongation factor activity"/>
    <property type="evidence" value="ECO:0007669"/>
    <property type="project" value="UniProtKB-UniRule"/>
</dbReference>
<dbReference type="CDD" id="cd14275">
    <property type="entry name" value="UBA_EF-Ts"/>
    <property type="match status" value="1"/>
</dbReference>
<dbReference type="FunFam" id="1.10.8.10:FF:000001">
    <property type="entry name" value="Elongation factor Ts"/>
    <property type="match status" value="1"/>
</dbReference>
<dbReference type="Gene3D" id="1.10.286.20">
    <property type="match status" value="1"/>
</dbReference>
<dbReference type="Gene3D" id="1.10.8.10">
    <property type="entry name" value="DNA helicase RuvA subunit, C-terminal domain"/>
    <property type="match status" value="1"/>
</dbReference>
<dbReference type="Gene3D" id="3.30.479.20">
    <property type="entry name" value="Elongation factor Ts, dimerisation domain"/>
    <property type="match status" value="1"/>
</dbReference>
<dbReference type="HAMAP" id="MF_00050">
    <property type="entry name" value="EF_Ts"/>
    <property type="match status" value="1"/>
</dbReference>
<dbReference type="InterPro" id="IPR036402">
    <property type="entry name" value="EF-Ts_dimer_sf"/>
</dbReference>
<dbReference type="InterPro" id="IPR001816">
    <property type="entry name" value="Transl_elong_EFTs/EF1B"/>
</dbReference>
<dbReference type="InterPro" id="IPR014039">
    <property type="entry name" value="Transl_elong_EFTs/EF1B_dimer"/>
</dbReference>
<dbReference type="InterPro" id="IPR018101">
    <property type="entry name" value="Transl_elong_Ts_CS"/>
</dbReference>
<dbReference type="InterPro" id="IPR009060">
    <property type="entry name" value="UBA-like_sf"/>
</dbReference>
<dbReference type="NCBIfam" id="TIGR00116">
    <property type="entry name" value="tsf"/>
    <property type="match status" value="1"/>
</dbReference>
<dbReference type="PANTHER" id="PTHR11741">
    <property type="entry name" value="ELONGATION FACTOR TS"/>
    <property type="match status" value="1"/>
</dbReference>
<dbReference type="PANTHER" id="PTHR11741:SF0">
    <property type="entry name" value="ELONGATION FACTOR TS, MITOCHONDRIAL"/>
    <property type="match status" value="1"/>
</dbReference>
<dbReference type="Pfam" id="PF00889">
    <property type="entry name" value="EF_TS"/>
    <property type="match status" value="1"/>
</dbReference>
<dbReference type="SUPFAM" id="SSF54713">
    <property type="entry name" value="Elongation factor Ts (EF-Ts), dimerisation domain"/>
    <property type="match status" value="1"/>
</dbReference>
<dbReference type="SUPFAM" id="SSF46934">
    <property type="entry name" value="UBA-like"/>
    <property type="match status" value="1"/>
</dbReference>
<dbReference type="PROSITE" id="PS01126">
    <property type="entry name" value="EF_TS_1"/>
    <property type="match status" value="1"/>
</dbReference>
<dbReference type="PROSITE" id="PS01127">
    <property type="entry name" value="EF_TS_2"/>
    <property type="match status" value="1"/>
</dbReference>
<organism>
    <name type="scientific">Galdieria sulphuraria</name>
    <name type="common">Red alga</name>
    <dbReference type="NCBI Taxonomy" id="130081"/>
    <lineage>
        <taxon>Eukaryota</taxon>
        <taxon>Rhodophyta</taxon>
        <taxon>Bangiophyceae</taxon>
        <taxon>Galdieriales</taxon>
        <taxon>Galdieriaceae</taxon>
        <taxon>Galdieria</taxon>
    </lineage>
</organism>
<feature type="chain" id="PRO_0000161246" description="Elongation factor Ts, chloroplastic">
    <location>
        <begin position="1"/>
        <end position="199"/>
    </location>
</feature>
<keyword id="KW-0150">Chloroplast</keyword>
<keyword id="KW-0251">Elongation factor</keyword>
<keyword id="KW-0934">Plastid</keyword>
<keyword id="KW-0648">Protein biosynthesis</keyword>
<gene>
    <name type="primary">tsf</name>
</gene>
<evidence type="ECO:0000255" key="1">
    <source>
        <dbReference type="HAMAP-Rule" id="MF_03135"/>
    </source>
</evidence>
<name>EFTS_GALSU</name>
<comment type="function">
    <text evidence="1">Associates with the EF-Tu.GDP complex and induces the exchange of GDP to GTP. It remains bound to the aminoacyl-tRNA.EF-Tu.GTP complex up to the GTP hydrolysis stage on the ribosome.</text>
</comment>
<comment type="subcellular location">
    <subcellularLocation>
        <location>Plastid</location>
        <location>Chloroplast</location>
    </subcellularLocation>
</comment>
<comment type="similarity">
    <text evidence="1">Belongs to the EF-Ts family.</text>
</comment>
<protein>
    <recommendedName>
        <fullName>Elongation factor Ts, chloroplastic</fullName>
        <shortName evidence="1">EF-Ts</shortName>
    </recommendedName>
</protein>